<comment type="function">
    <text>Flagellin is the subunit protein which polymerizes to form the filaments of bacterial flagella.</text>
</comment>
<comment type="subcellular location">
    <subcellularLocation>
        <location>Secreted</location>
    </subcellularLocation>
    <subcellularLocation>
        <location>Bacterial flagellum</location>
    </subcellularLocation>
</comment>
<comment type="similarity">
    <text evidence="1">Belongs to the bacterial flagellin family.</text>
</comment>
<protein>
    <recommendedName>
        <fullName>Flagellin C</fullName>
    </recommendedName>
</protein>
<reference key="1">
    <citation type="journal article" date="1997" name="J. Bacteriol.">
        <title>Three genes of a motility operon and their role in flagellar rotary speed variation in Rhizobium meliloti.</title>
        <authorList>
            <person name="Platzer J."/>
            <person name="Sterr W."/>
            <person name="Hausmann M."/>
            <person name="Schmitt R."/>
        </authorList>
    </citation>
    <scope>NUCLEOTIDE SEQUENCE [GENOMIC DNA]</scope>
    <source>
        <strain>RU11/001</strain>
    </source>
</reference>
<reference key="2">
    <citation type="submission" date="2001-01" db="EMBL/GenBank/DDBJ databases">
        <authorList>
            <person name="Schmitt R."/>
        </authorList>
    </citation>
    <scope>SEQUENCE REVISION TO 82</scope>
</reference>
<reference key="3">
    <citation type="journal article" date="2001" name="Proc. Natl. Acad. Sci. U.S.A.">
        <title>Analysis of the chromosome sequence of the legume symbiont Sinorhizobium meliloti strain 1021.</title>
        <authorList>
            <person name="Capela D."/>
            <person name="Barloy-Hubler F."/>
            <person name="Gouzy J."/>
            <person name="Bothe G."/>
            <person name="Ampe F."/>
            <person name="Batut J."/>
            <person name="Boistard P."/>
            <person name="Becker A."/>
            <person name="Boutry M."/>
            <person name="Cadieu E."/>
            <person name="Dreano S."/>
            <person name="Gloux S."/>
            <person name="Godrie T."/>
            <person name="Goffeau A."/>
            <person name="Kahn D."/>
            <person name="Kiss E."/>
            <person name="Lelaure V."/>
            <person name="Masuy D."/>
            <person name="Pohl T."/>
            <person name="Portetelle D."/>
            <person name="Puehler A."/>
            <person name="Purnelle B."/>
            <person name="Ramsperger U."/>
            <person name="Renard C."/>
            <person name="Thebault P."/>
            <person name="Vandenbol M."/>
            <person name="Weidner S."/>
            <person name="Galibert F."/>
        </authorList>
    </citation>
    <scope>NUCLEOTIDE SEQUENCE [LARGE SCALE GENOMIC DNA]</scope>
    <source>
        <strain>1021</strain>
    </source>
</reference>
<reference key="4">
    <citation type="journal article" date="2001" name="Science">
        <title>The composite genome of the legume symbiont Sinorhizobium meliloti.</title>
        <authorList>
            <person name="Galibert F."/>
            <person name="Finan T.M."/>
            <person name="Long S.R."/>
            <person name="Puehler A."/>
            <person name="Abola P."/>
            <person name="Ampe F."/>
            <person name="Barloy-Hubler F."/>
            <person name="Barnett M.J."/>
            <person name="Becker A."/>
            <person name="Boistard P."/>
            <person name="Bothe G."/>
            <person name="Boutry M."/>
            <person name="Bowser L."/>
            <person name="Buhrmester J."/>
            <person name="Cadieu E."/>
            <person name="Capela D."/>
            <person name="Chain P."/>
            <person name="Cowie A."/>
            <person name="Davis R.W."/>
            <person name="Dreano S."/>
            <person name="Federspiel N.A."/>
            <person name="Fisher R.F."/>
            <person name="Gloux S."/>
            <person name="Godrie T."/>
            <person name="Goffeau A."/>
            <person name="Golding B."/>
            <person name="Gouzy J."/>
            <person name="Gurjal M."/>
            <person name="Hernandez-Lucas I."/>
            <person name="Hong A."/>
            <person name="Huizar L."/>
            <person name="Hyman R.W."/>
            <person name="Jones T."/>
            <person name="Kahn D."/>
            <person name="Kahn M.L."/>
            <person name="Kalman S."/>
            <person name="Keating D.H."/>
            <person name="Kiss E."/>
            <person name="Komp C."/>
            <person name="Lelaure V."/>
            <person name="Masuy D."/>
            <person name="Palm C."/>
            <person name="Peck M.C."/>
            <person name="Pohl T.M."/>
            <person name="Portetelle D."/>
            <person name="Purnelle B."/>
            <person name="Ramsperger U."/>
            <person name="Surzycki R."/>
            <person name="Thebault P."/>
            <person name="Vandenbol M."/>
            <person name="Vorhoelter F.J."/>
            <person name="Weidner S."/>
            <person name="Wells D.H."/>
            <person name="Wong K."/>
            <person name="Yeh K.-C."/>
            <person name="Batut J."/>
        </authorList>
    </citation>
    <scope>NUCLEOTIDE SEQUENCE [LARGE SCALE GENOMIC DNA]</scope>
    <source>
        <strain>1021</strain>
    </source>
</reference>
<keyword id="KW-0975">Bacterial flagellum</keyword>
<keyword id="KW-1185">Reference proteome</keyword>
<keyword id="KW-0964">Secreted</keyword>
<feature type="chain" id="PRO_0000182625" description="Flagellin C">
    <location>
        <begin position="1"/>
        <end position="321"/>
    </location>
</feature>
<feature type="sequence conflict" description="In Ref. 1; AAB81422." evidence="1" ref="1">
    <original>Y</original>
    <variation>F</variation>
    <location>
        <position position="35"/>
    </location>
</feature>
<feature type="sequence conflict" description="In Ref. 1; AAB81422." evidence="1" ref="1">
    <original>S</original>
    <variation>A</variation>
    <location>
        <position position="139"/>
    </location>
</feature>
<feature type="sequence conflict" description="In Ref. 1; AAB81422." evidence="1" ref="1">
    <original>A</original>
    <variation>S</variation>
    <location>
        <position position="180"/>
    </location>
</feature>
<feature type="sequence conflict" description="In Ref. 1; AAB81422." evidence="1" ref="1">
    <original>N</original>
    <variation>D</variation>
    <location>
        <position position="189"/>
    </location>
</feature>
<feature type="sequence conflict" description="In Ref. 1; AAB81422." evidence="1" ref="1">
    <original>A</original>
    <variation>G</variation>
    <location>
        <position position="214"/>
    </location>
</feature>
<name>FLAC_RHIME</name>
<organism>
    <name type="scientific">Rhizobium meliloti (strain 1021)</name>
    <name type="common">Ensifer meliloti</name>
    <name type="synonym">Sinorhizobium meliloti</name>
    <dbReference type="NCBI Taxonomy" id="266834"/>
    <lineage>
        <taxon>Bacteria</taxon>
        <taxon>Pseudomonadati</taxon>
        <taxon>Pseudomonadota</taxon>
        <taxon>Alphaproteobacteria</taxon>
        <taxon>Hyphomicrobiales</taxon>
        <taxon>Rhizobiaceae</taxon>
        <taxon>Sinorhizobium/Ensifer group</taxon>
        <taxon>Sinorhizobium</taxon>
    </lineage>
</organism>
<gene>
    <name type="primary">flaC</name>
    <name type="ordered locus">R00672</name>
    <name type="ORF">SMc03040</name>
</gene>
<evidence type="ECO:0000305" key="1"/>
<dbReference type="EMBL" id="L49337">
    <property type="protein sequence ID" value="AAB81422.2"/>
    <property type="molecule type" value="Genomic_DNA"/>
</dbReference>
<dbReference type="EMBL" id="AL591688">
    <property type="protein sequence ID" value="CAC45244.1"/>
    <property type="molecule type" value="Genomic_DNA"/>
</dbReference>
<dbReference type="RefSeq" id="NP_384778.1">
    <property type="nucleotide sequence ID" value="NC_003047.1"/>
</dbReference>
<dbReference type="RefSeq" id="WP_010968739.1">
    <property type="nucleotide sequence ID" value="NC_003047.1"/>
</dbReference>
<dbReference type="SMR" id="Q52943"/>
<dbReference type="EnsemblBacteria" id="CAC45244">
    <property type="protein sequence ID" value="CAC45244"/>
    <property type="gene ID" value="SMc03040"/>
</dbReference>
<dbReference type="KEGG" id="sme:SMc03040"/>
<dbReference type="PATRIC" id="fig|266834.11.peg.2046"/>
<dbReference type="eggNOG" id="COG1344">
    <property type="taxonomic scope" value="Bacteria"/>
</dbReference>
<dbReference type="HOGENOM" id="CLU_011142_1_0_5"/>
<dbReference type="OrthoDB" id="8328560at2"/>
<dbReference type="Proteomes" id="UP000001976">
    <property type="component" value="Chromosome"/>
</dbReference>
<dbReference type="GO" id="GO:0009288">
    <property type="term" value="C:bacterial-type flagellum"/>
    <property type="evidence" value="ECO:0007669"/>
    <property type="project" value="UniProtKB-SubCell"/>
</dbReference>
<dbReference type="GO" id="GO:0005576">
    <property type="term" value="C:extracellular region"/>
    <property type="evidence" value="ECO:0007669"/>
    <property type="project" value="UniProtKB-SubCell"/>
</dbReference>
<dbReference type="GO" id="GO:0005198">
    <property type="term" value="F:structural molecule activity"/>
    <property type="evidence" value="ECO:0007669"/>
    <property type="project" value="InterPro"/>
</dbReference>
<dbReference type="Gene3D" id="1.20.1330.10">
    <property type="entry name" value="f41 fragment of flagellin, N-terminal domain"/>
    <property type="match status" value="1"/>
</dbReference>
<dbReference type="InterPro" id="IPR001492">
    <property type="entry name" value="Flagellin"/>
</dbReference>
<dbReference type="InterPro" id="IPR046358">
    <property type="entry name" value="Flagellin_C"/>
</dbReference>
<dbReference type="InterPro" id="IPR001029">
    <property type="entry name" value="Flagellin_N"/>
</dbReference>
<dbReference type="PANTHER" id="PTHR42792">
    <property type="entry name" value="FLAGELLIN"/>
    <property type="match status" value="1"/>
</dbReference>
<dbReference type="PANTHER" id="PTHR42792:SF2">
    <property type="entry name" value="FLAGELLIN"/>
    <property type="match status" value="1"/>
</dbReference>
<dbReference type="Pfam" id="PF00700">
    <property type="entry name" value="Flagellin_C"/>
    <property type="match status" value="1"/>
</dbReference>
<dbReference type="Pfam" id="PF00669">
    <property type="entry name" value="Flagellin_N"/>
    <property type="match status" value="1"/>
</dbReference>
<dbReference type="PRINTS" id="PR00207">
    <property type="entry name" value="FLAGELLIN"/>
</dbReference>
<dbReference type="SUPFAM" id="SSF64518">
    <property type="entry name" value="Phase 1 flagellin"/>
    <property type="match status" value="1"/>
</dbReference>
<proteinExistence type="inferred from homology"/>
<sequence length="321" mass="33830">MTSIMTNPAAMAALQTLRAINHNLETTQGRISSGYRVETAADNAAYWSIATTMRSDNAALSTVHDALGLGAAKVDTFYSAMDTVIDVMTEIKAKLVAASEPGVDKDKINKEVAELKSQLNSAAQSASFSGENWLYNGASAALGTKSIVASFNRSADGSVTVSTLNYDTAKSVLIDVTDPARGMLTKAVNADALQSTPTGTARNYYLIDAGAAPAGATEIEIDNATTGAQLGDMISVVDELISQLTDSAATLGAITSRIEMQESFVANLMDVIDKGVGRLVDADMNEESTRLKALQTQQQLGIQSLSIANTTSENILRLFQE</sequence>
<accession>Q52943</accession>